<evidence type="ECO:0000256" key="1">
    <source>
        <dbReference type="SAM" id="MobiDB-lite"/>
    </source>
</evidence>
<gene>
    <name type="ORF">F58A4.2</name>
</gene>
<name>YMH2_CAEEL</name>
<proteinExistence type="predicted"/>
<organism>
    <name type="scientific">Caenorhabditis elegans</name>
    <dbReference type="NCBI Taxonomy" id="6239"/>
    <lineage>
        <taxon>Eukaryota</taxon>
        <taxon>Metazoa</taxon>
        <taxon>Ecdysozoa</taxon>
        <taxon>Nematoda</taxon>
        <taxon>Chromadorea</taxon>
        <taxon>Rhabditida</taxon>
        <taxon>Rhabditina</taxon>
        <taxon>Rhabditomorpha</taxon>
        <taxon>Rhabditoidea</taxon>
        <taxon>Rhabditidae</taxon>
        <taxon>Peloderinae</taxon>
        <taxon>Caenorhabditis</taxon>
    </lineage>
</organism>
<accession>P34469</accession>
<reference key="1">
    <citation type="journal article" date="1994" name="Nature">
        <title>2.2 Mb of contiguous nucleotide sequence from chromosome III of C. elegans.</title>
        <authorList>
            <person name="Wilson R."/>
            <person name="Ainscough R."/>
            <person name="Anderson K."/>
            <person name="Baynes C."/>
            <person name="Berks M."/>
            <person name="Bonfield J."/>
            <person name="Burton J."/>
            <person name="Connell M."/>
            <person name="Copsey T."/>
            <person name="Cooper J."/>
            <person name="Coulson A."/>
            <person name="Craxton M."/>
            <person name="Dear S."/>
            <person name="Du Z."/>
            <person name="Durbin R."/>
            <person name="Favello A."/>
            <person name="Fraser A."/>
            <person name="Fulton L."/>
            <person name="Gardner A."/>
            <person name="Green P."/>
            <person name="Hawkins T."/>
            <person name="Hillier L."/>
            <person name="Jier M."/>
            <person name="Johnston L."/>
            <person name="Jones M."/>
            <person name="Kershaw J."/>
            <person name="Kirsten J."/>
            <person name="Laisster N."/>
            <person name="Latreille P."/>
            <person name="Lightning J."/>
            <person name="Lloyd C."/>
            <person name="Mortimore B."/>
            <person name="O'Callaghan M."/>
            <person name="Parsons J."/>
            <person name="Percy C."/>
            <person name="Rifken L."/>
            <person name="Roopra A."/>
            <person name="Saunders D."/>
            <person name="Shownkeen R."/>
            <person name="Sims M."/>
            <person name="Smaldon N."/>
            <person name="Smith A."/>
            <person name="Smith M."/>
            <person name="Sonnhammer E."/>
            <person name="Staden R."/>
            <person name="Sulston J."/>
            <person name="Thierry-Mieg J."/>
            <person name="Thomas K."/>
            <person name="Vaudin M."/>
            <person name="Vaughan K."/>
            <person name="Waterston R."/>
            <person name="Watson A."/>
            <person name="Weinstock L."/>
            <person name="Wilkinson-Sproat J."/>
            <person name="Wohldman P."/>
        </authorList>
    </citation>
    <scope>NUCLEOTIDE SEQUENCE [LARGE SCALE GENOMIC DNA]</scope>
    <source>
        <strain>Bristol N2</strain>
    </source>
</reference>
<reference key="2">
    <citation type="journal article" date="1998" name="Science">
        <title>Genome sequence of the nematode C. elegans: a platform for investigating biology.</title>
        <authorList>
            <consortium name="The C. elegans sequencing consortium"/>
        </authorList>
    </citation>
    <scope>NUCLEOTIDE SEQUENCE [LARGE SCALE GENOMIC DNA]</scope>
    <source>
        <strain>Bristol N2</strain>
    </source>
</reference>
<sequence>MLKSLLSLVTSGNKEKKKKRSSAGLTGHAPPAADSSFFSEADSSIMNVTSITLPTVSGRDDSIQSTSPVLGYSPFGFVERKNRAASFDFCLSDKPQSDVVVHRRSLQPSTPTPNQSAESSFIENIFDSPGQRNRLHSMIEEKIYEAGSGSPQKFTGRVS</sequence>
<protein>
    <recommendedName>
        <fullName>Uncharacterized protein F58A4.2</fullName>
    </recommendedName>
</protein>
<keyword id="KW-1185">Reference proteome</keyword>
<feature type="chain" id="PRO_0000065373" description="Uncharacterized protein F58A4.2">
    <location>
        <begin position="1"/>
        <end position="159"/>
    </location>
</feature>
<feature type="region of interest" description="Disordered" evidence="1">
    <location>
        <begin position="9"/>
        <end position="36"/>
    </location>
</feature>
<dbReference type="EMBL" id="Z22179">
    <property type="protein sequence ID" value="CAA80168.1"/>
    <property type="molecule type" value="Genomic_DNA"/>
</dbReference>
<dbReference type="PIR" id="E88560">
    <property type="entry name" value="E88560"/>
</dbReference>
<dbReference type="PIR" id="S40974">
    <property type="entry name" value="S40974"/>
</dbReference>
<dbReference type="RefSeq" id="NP_499124.1">
    <property type="nucleotide sequence ID" value="NM_066723.4"/>
</dbReference>
<dbReference type="FunCoup" id="P34469">
    <property type="interactions" value="1520"/>
</dbReference>
<dbReference type="STRING" id="6239.F58A4.2.1"/>
<dbReference type="PaxDb" id="6239-F58A4.2"/>
<dbReference type="EnsemblMetazoa" id="F58A4.2.1">
    <property type="protein sequence ID" value="F58A4.2.1"/>
    <property type="gene ID" value="WBGene00010227"/>
</dbReference>
<dbReference type="GeneID" id="176356"/>
<dbReference type="KEGG" id="cel:CELE_F58A4.2"/>
<dbReference type="UCSC" id="F58A4.2">
    <property type="organism name" value="c. elegans"/>
</dbReference>
<dbReference type="AGR" id="WB:WBGene00010227"/>
<dbReference type="CTD" id="176356"/>
<dbReference type="WormBase" id="F58A4.2">
    <property type="protein sequence ID" value="CE01017"/>
    <property type="gene ID" value="WBGene00010227"/>
</dbReference>
<dbReference type="eggNOG" id="ENOG502THY0">
    <property type="taxonomic scope" value="Eukaryota"/>
</dbReference>
<dbReference type="HOGENOM" id="CLU_1628525_0_0_1"/>
<dbReference type="InParanoid" id="P34469"/>
<dbReference type="OMA" id="TSMISTE"/>
<dbReference type="OrthoDB" id="5780826at2759"/>
<dbReference type="PRO" id="PR:P34469"/>
<dbReference type="Proteomes" id="UP000001940">
    <property type="component" value="Chromosome III"/>
</dbReference>
<dbReference type="Bgee" id="WBGene00010227">
    <property type="expression patterns" value="Expressed in germ line (C elegans) and 4 other cell types or tissues"/>
</dbReference>